<organism>
    <name type="scientific">Escherichia coli O9:H4 (strain HS)</name>
    <dbReference type="NCBI Taxonomy" id="331112"/>
    <lineage>
        <taxon>Bacteria</taxon>
        <taxon>Pseudomonadati</taxon>
        <taxon>Pseudomonadota</taxon>
        <taxon>Gammaproteobacteria</taxon>
        <taxon>Enterobacterales</taxon>
        <taxon>Enterobacteriaceae</taxon>
        <taxon>Escherichia</taxon>
    </lineage>
</organism>
<keyword id="KW-0963">Cytoplasm</keyword>
<keyword id="KW-0448">Lipopolysaccharide biosynthesis</keyword>
<keyword id="KW-0548">Nucleotidyltransferase</keyword>
<keyword id="KW-0808">Transferase</keyword>
<sequence>MSFVVIIPARYASTRLPGKPLVDINGKPMIVHVLERARESGAERIIVATDHEDVARAVEAAGGEVCMTRADHQSGTERLAEVVEKCAFSDDTVIVNVQGDEPMIPATIIRQVADNLAQRQVGMATLAVPIHNAEEAFNPNAVKVVLDAEGYALYFSRATIPWDRDRFAEGLETVGDNFLRHLGIYGYRAGFIRRYVNWQPSPLEHIEMLEQLRVLWYGEKIHVAVAQEVPGTGVDTPEDLERVRAEMR</sequence>
<protein>
    <recommendedName>
        <fullName evidence="1">3-deoxy-manno-octulosonate cytidylyltransferase</fullName>
        <ecNumber evidence="1">2.7.7.38</ecNumber>
    </recommendedName>
    <alternativeName>
        <fullName evidence="1">CMP-2-keto-3-deoxyoctulosonic acid synthase</fullName>
        <shortName evidence="1">CKS</shortName>
        <shortName evidence="1">CMP-KDO synthase</shortName>
    </alternativeName>
</protein>
<gene>
    <name evidence="1" type="primary">kdsB</name>
    <name type="ordered locus">EcHS_A1025</name>
</gene>
<dbReference type="EC" id="2.7.7.38" evidence="1"/>
<dbReference type="EMBL" id="CP000802">
    <property type="protein sequence ID" value="ABV05374.1"/>
    <property type="molecule type" value="Genomic_DNA"/>
</dbReference>
<dbReference type="RefSeq" id="WP_000011603.1">
    <property type="nucleotide sequence ID" value="NC_009800.1"/>
</dbReference>
<dbReference type="SMR" id="A7ZYM0"/>
<dbReference type="KEGG" id="ecx:EcHS_A1025"/>
<dbReference type="HOGENOM" id="CLU_065038_1_0_6"/>
<dbReference type="UniPathway" id="UPA00030"/>
<dbReference type="UniPathway" id="UPA00358">
    <property type="reaction ID" value="UER00476"/>
</dbReference>
<dbReference type="GO" id="GO:0005829">
    <property type="term" value="C:cytosol"/>
    <property type="evidence" value="ECO:0007669"/>
    <property type="project" value="TreeGrafter"/>
</dbReference>
<dbReference type="GO" id="GO:0008690">
    <property type="term" value="F:3-deoxy-manno-octulosonate cytidylyltransferase activity"/>
    <property type="evidence" value="ECO:0007669"/>
    <property type="project" value="UniProtKB-UniRule"/>
</dbReference>
<dbReference type="GO" id="GO:0033468">
    <property type="term" value="P:CMP-keto-3-deoxy-D-manno-octulosonic acid biosynthetic process"/>
    <property type="evidence" value="ECO:0007669"/>
    <property type="project" value="UniProtKB-UniRule"/>
</dbReference>
<dbReference type="GO" id="GO:0009103">
    <property type="term" value="P:lipopolysaccharide biosynthetic process"/>
    <property type="evidence" value="ECO:0007669"/>
    <property type="project" value="UniProtKB-UniRule"/>
</dbReference>
<dbReference type="CDD" id="cd02517">
    <property type="entry name" value="CMP-KDO-Synthetase"/>
    <property type="match status" value="1"/>
</dbReference>
<dbReference type="FunFam" id="3.90.550.10:FF:000011">
    <property type="entry name" value="3-deoxy-manno-octulosonate cytidylyltransferase"/>
    <property type="match status" value="1"/>
</dbReference>
<dbReference type="Gene3D" id="3.90.550.10">
    <property type="entry name" value="Spore Coat Polysaccharide Biosynthesis Protein SpsA, Chain A"/>
    <property type="match status" value="1"/>
</dbReference>
<dbReference type="HAMAP" id="MF_00057">
    <property type="entry name" value="KdsB"/>
    <property type="match status" value="1"/>
</dbReference>
<dbReference type="InterPro" id="IPR003329">
    <property type="entry name" value="Cytidylyl_trans"/>
</dbReference>
<dbReference type="InterPro" id="IPR004528">
    <property type="entry name" value="KdsB"/>
</dbReference>
<dbReference type="InterPro" id="IPR029044">
    <property type="entry name" value="Nucleotide-diphossugar_trans"/>
</dbReference>
<dbReference type="NCBIfam" id="TIGR00466">
    <property type="entry name" value="kdsB"/>
    <property type="match status" value="1"/>
</dbReference>
<dbReference type="NCBIfam" id="NF003950">
    <property type="entry name" value="PRK05450.1-3"/>
    <property type="match status" value="1"/>
</dbReference>
<dbReference type="NCBIfam" id="NF003952">
    <property type="entry name" value="PRK05450.1-5"/>
    <property type="match status" value="1"/>
</dbReference>
<dbReference type="NCBIfam" id="NF009905">
    <property type="entry name" value="PRK13368.1"/>
    <property type="match status" value="1"/>
</dbReference>
<dbReference type="PANTHER" id="PTHR42866">
    <property type="entry name" value="3-DEOXY-MANNO-OCTULOSONATE CYTIDYLYLTRANSFERASE"/>
    <property type="match status" value="1"/>
</dbReference>
<dbReference type="PANTHER" id="PTHR42866:SF2">
    <property type="entry name" value="3-DEOXY-MANNO-OCTULOSONATE CYTIDYLYLTRANSFERASE, MITOCHONDRIAL"/>
    <property type="match status" value="1"/>
</dbReference>
<dbReference type="Pfam" id="PF02348">
    <property type="entry name" value="CTP_transf_3"/>
    <property type="match status" value="1"/>
</dbReference>
<dbReference type="SUPFAM" id="SSF53448">
    <property type="entry name" value="Nucleotide-diphospho-sugar transferases"/>
    <property type="match status" value="1"/>
</dbReference>
<name>KDSB_ECOHS</name>
<accession>A7ZYM0</accession>
<evidence type="ECO:0000255" key="1">
    <source>
        <dbReference type="HAMAP-Rule" id="MF_00057"/>
    </source>
</evidence>
<comment type="function">
    <text evidence="1">Activates KDO (a required 8-carbon sugar) for incorporation into bacterial lipopolysaccharide in Gram-negative bacteria.</text>
</comment>
<comment type="catalytic activity">
    <reaction evidence="1">
        <text>3-deoxy-alpha-D-manno-oct-2-ulosonate + CTP = CMP-3-deoxy-beta-D-manno-octulosonate + diphosphate</text>
        <dbReference type="Rhea" id="RHEA:23448"/>
        <dbReference type="ChEBI" id="CHEBI:33019"/>
        <dbReference type="ChEBI" id="CHEBI:37563"/>
        <dbReference type="ChEBI" id="CHEBI:85986"/>
        <dbReference type="ChEBI" id="CHEBI:85987"/>
        <dbReference type="EC" id="2.7.7.38"/>
    </reaction>
</comment>
<comment type="pathway">
    <text evidence="1">Nucleotide-sugar biosynthesis; CMP-3-deoxy-D-manno-octulosonate biosynthesis; CMP-3-deoxy-D-manno-octulosonate from 3-deoxy-D-manno-octulosonate and CTP: step 1/1.</text>
</comment>
<comment type="pathway">
    <text evidence="1">Bacterial outer membrane biogenesis; lipopolysaccharide biosynthesis.</text>
</comment>
<comment type="subcellular location">
    <subcellularLocation>
        <location evidence="1">Cytoplasm</location>
    </subcellularLocation>
</comment>
<comment type="similarity">
    <text evidence="1">Belongs to the KdsB family.</text>
</comment>
<proteinExistence type="inferred from homology"/>
<feature type="chain" id="PRO_1000057401" description="3-deoxy-manno-octulosonate cytidylyltransferase">
    <location>
        <begin position="1"/>
        <end position="248"/>
    </location>
</feature>
<reference key="1">
    <citation type="journal article" date="2008" name="J. Bacteriol.">
        <title>The pangenome structure of Escherichia coli: comparative genomic analysis of E. coli commensal and pathogenic isolates.</title>
        <authorList>
            <person name="Rasko D.A."/>
            <person name="Rosovitz M.J."/>
            <person name="Myers G.S.A."/>
            <person name="Mongodin E.F."/>
            <person name="Fricke W.F."/>
            <person name="Gajer P."/>
            <person name="Crabtree J."/>
            <person name="Sebaihia M."/>
            <person name="Thomson N.R."/>
            <person name="Chaudhuri R."/>
            <person name="Henderson I.R."/>
            <person name="Sperandio V."/>
            <person name="Ravel J."/>
        </authorList>
    </citation>
    <scope>NUCLEOTIDE SEQUENCE [LARGE SCALE GENOMIC DNA]</scope>
    <source>
        <strain>HS</strain>
    </source>
</reference>